<gene>
    <name type="primary">CFT2</name>
    <name type="synonym">YDH1</name>
    <name type="ordered locus">YLR115W</name>
    <name type="ORF">L2946</name>
</gene>
<reference key="1">
    <citation type="journal article" date="1997" name="Yeast">
        <title>Sequence analysis of a 37.6 kbp cosmid clone from the right arm of Saccharomyces cerevisiae chromosome XII, carrying YAP3, HOG1, SNR6, tRNA-Arg3 and 23 new open reading frames, among which several homologies to proteins involved in cell division control and to mammalian growth factors and other animal proteins are found.</title>
        <authorList>
            <person name="Verhasselt P."/>
            <person name="Volckaert G."/>
        </authorList>
    </citation>
    <scope>NUCLEOTIDE SEQUENCE [GENOMIC DNA]</scope>
    <source>
        <strain>ATCC 90840 / EAY235 / FY23</strain>
    </source>
</reference>
<reference key="2">
    <citation type="journal article" date="1997" name="Nature">
        <title>The nucleotide sequence of Saccharomyces cerevisiae chromosome XII.</title>
        <authorList>
            <person name="Johnston M."/>
            <person name="Hillier L.W."/>
            <person name="Riles L."/>
            <person name="Albermann K."/>
            <person name="Andre B."/>
            <person name="Ansorge W."/>
            <person name="Benes V."/>
            <person name="Brueckner M."/>
            <person name="Delius H."/>
            <person name="Dubois E."/>
            <person name="Duesterhoeft A."/>
            <person name="Entian K.-D."/>
            <person name="Floeth M."/>
            <person name="Goffeau A."/>
            <person name="Hebling U."/>
            <person name="Heumann K."/>
            <person name="Heuss-Neitzel D."/>
            <person name="Hilbert H."/>
            <person name="Hilger F."/>
            <person name="Kleine K."/>
            <person name="Koetter P."/>
            <person name="Louis E.J."/>
            <person name="Messenguy F."/>
            <person name="Mewes H.-W."/>
            <person name="Miosga T."/>
            <person name="Moestl D."/>
            <person name="Mueller-Auer S."/>
            <person name="Nentwich U."/>
            <person name="Obermaier B."/>
            <person name="Piravandi E."/>
            <person name="Pohl T.M."/>
            <person name="Portetelle D."/>
            <person name="Purnelle B."/>
            <person name="Rechmann S."/>
            <person name="Rieger M."/>
            <person name="Rinke M."/>
            <person name="Rose M."/>
            <person name="Scharfe M."/>
            <person name="Scherens B."/>
            <person name="Scholler P."/>
            <person name="Schwager C."/>
            <person name="Schwarz S."/>
            <person name="Underwood A.P."/>
            <person name="Urrestarazu L.A."/>
            <person name="Vandenbol M."/>
            <person name="Verhasselt P."/>
            <person name="Vierendeels F."/>
            <person name="Voet M."/>
            <person name="Volckaert G."/>
            <person name="Voss H."/>
            <person name="Wambutt R."/>
            <person name="Wedler E."/>
            <person name="Wedler H."/>
            <person name="Zimmermann F.K."/>
            <person name="Zollner A."/>
            <person name="Hani J."/>
            <person name="Hoheisel J.D."/>
        </authorList>
    </citation>
    <scope>NUCLEOTIDE SEQUENCE [LARGE SCALE GENOMIC DNA]</scope>
    <source>
        <strain>ATCC 204508 / S288c</strain>
    </source>
</reference>
<reference key="3">
    <citation type="journal article" date="2014" name="G3 (Bethesda)">
        <title>The reference genome sequence of Saccharomyces cerevisiae: Then and now.</title>
        <authorList>
            <person name="Engel S.R."/>
            <person name="Dietrich F.S."/>
            <person name="Fisk D.G."/>
            <person name="Binkley G."/>
            <person name="Balakrishnan R."/>
            <person name="Costanzo M.C."/>
            <person name="Dwight S.S."/>
            <person name="Hitz B.C."/>
            <person name="Karra K."/>
            <person name="Nash R.S."/>
            <person name="Weng S."/>
            <person name="Wong E.D."/>
            <person name="Lloyd P."/>
            <person name="Skrzypek M.S."/>
            <person name="Miyasato S.R."/>
            <person name="Simison M."/>
            <person name="Cherry J.M."/>
        </authorList>
    </citation>
    <scope>GENOME REANNOTATION</scope>
    <source>
        <strain>ATCC 204508 / S288c</strain>
    </source>
</reference>
<reference key="4">
    <citation type="journal article" date="1997" name="J. Biol. Chem.">
        <title>Cleavage factor II of Saccharomyces cerevisiae contains homologues to subunits of the mammalian Cleavage/ polyadenylation specificity factor and exhibits sequence-specific, ATP-dependent interaction with precursor RNA.</title>
        <authorList>
            <person name="Zhao J."/>
            <person name="Kessler M.M."/>
            <person name="Moore C.L."/>
        </authorList>
    </citation>
    <scope>RNA-BINDING</scope>
</reference>
<reference key="5">
    <citation type="journal article" date="2001" name="EMBO J.">
        <title>Recognition of polyadenylation sites in yeast pre-mRNAs by cleavage and polyadenylation factor.</title>
        <authorList>
            <person name="Dichtl B."/>
            <person name="Keller W."/>
        </authorList>
    </citation>
    <scope>RNA-BINDING</scope>
    <scope>FUNCTION</scope>
</reference>
<reference key="6">
    <citation type="journal article" date="2003" name="J. Biol. Chem.">
        <title>Organization and function of APT, a subcomplex of the yeast cleavage and polyadenylation factor involved in the formation of mRNA and small nucleolar RNA 3'-ends.</title>
        <authorList>
            <person name="Nedea E."/>
            <person name="He X."/>
            <person name="Kim M."/>
            <person name="Pootoolal J."/>
            <person name="Zhong G."/>
            <person name="Canadien V."/>
            <person name="Hughes T."/>
            <person name="Buratowski S."/>
            <person name="Moore C.L."/>
            <person name="Greenblatt J."/>
        </authorList>
    </citation>
    <scope>IDENTIFICATION IN THE CPF COMPLEX</scope>
    <scope>SUBCELLULAR LOCATION</scope>
    <scope>IDENTIFICATION BY MASS SPECTROMETRY</scope>
</reference>
<reference key="7">
    <citation type="journal article" date="2003" name="Nature">
        <title>Global analysis of protein localization in budding yeast.</title>
        <authorList>
            <person name="Huh W.-K."/>
            <person name="Falvo J.V."/>
            <person name="Gerke L.C."/>
            <person name="Carroll A.S."/>
            <person name="Howson R.W."/>
            <person name="Weissman J.S."/>
            <person name="O'Shea E.K."/>
        </authorList>
    </citation>
    <scope>SUBCELLULAR LOCATION [LARGE SCALE ANALYSIS]</scope>
</reference>
<reference key="8">
    <citation type="journal article" date="2003" name="Nature">
        <title>Global analysis of protein expression in yeast.</title>
        <authorList>
            <person name="Ghaemmaghami S."/>
            <person name="Huh W.-K."/>
            <person name="Bower K."/>
            <person name="Howson R.W."/>
            <person name="Belle A."/>
            <person name="Dephoure N."/>
            <person name="O'Shea E.K."/>
            <person name="Weissman J.S."/>
        </authorList>
    </citation>
    <scope>LEVEL OF PROTEIN EXPRESSION [LARGE SCALE ANALYSIS]</scope>
</reference>
<reference key="9">
    <citation type="journal article" date="2003" name="Nucleic Acids Res.">
        <title>The role of the yeast cleavage and polyadenylation factor subunit Ydh1p/Cft2p in pre-mRNA 3'-end formation.</title>
        <authorList>
            <person name="Kyburz A."/>
            <person name="Sadowski M."/>
            <person name="Dichtl B."/>
            <person name="Keller W."/>
        </authorList>
    </citation>
    <scope>FUNCTION</scope>
    <scope>INTERACTION WITH RPB1 AND PCF11</scope>
</reference>
<reference key="10">
    <citation type="journal article" date="2006" name="Nature">
        <title>Polyadenylation factor CPSF-73 is the pre-mRNA 3'-end-processing endonuclease.</title>
        <authorList>
            <person name="Mandel C.R."/>
            <person name="Kaneko S."/>
            <person name="Zhang H."/>
            <person name="Gebauer D."/>
            <person name="Vethantham V."/>
            <person name="Manley J.L."/>
            <person name="Tong L."/>
        </authorList>
    </citation>
    <scope>X-RAY CRYSTALLOGRAPHY (2.5 ANGSTROMS) OF 1-717</scope>
    <scope>ABSENCE OF ENDONUCLEASE ACTIVITY</scope>
</reference>
<sequence length="859" mass="96254">MTYKYNCCDDGSGTTVGSVVRFDNVTLLIDPGWNPSKVSYEQCIKYWEKVIPEIDVIILSQPTIECLGAHSLLYYNFTSHFISRIQVYATLPVINLGRVSTIDSYASAGVIGPYDTNKLDLEDIEISFDHIVPLKYSQLVDLRSRYDGLTLLAYNAGVCPGGSIWCISTYSEKLVYAKRWNHTRDNILNAASILDATGKPLSTLMRPSAIITTLDRFGSSQPFKKRSKIFKDTLKKGLSSDGSVIIPVDMSGKFLDLFTQVHELLFESTKINAHTQVPVLILSYARGRTLTYAKSMLEWLSPSLLKTWENRNNTSPFEIGSRIKIIAPNELSKYPGSKICFVSEVGALINEVIIKVGNSEKTTLILTKPSFECASSLDKILEIVEQDERNWKTFPEDGKSFLCDNYISIDTIKEEPLSKEETEAFKVQLKEKKRDRNKKILLVKRESKKLANGNAIIDDTNGERAMRNQDILVENVNGVPPIDHIMGGDEDDDEEEENDNLLNLLKDNSEKSAAKKNTEVPVDIIIQPSAASKHKMFPFNPAKIKKDDYGTVVDFTMFLPDDSDNVNQNSRKRPLKDGAKTTSPVNEEDNKNEEEDGYNMSDPISKRSKHRASRYSGFSGTGEAENFDNLDYLKIDKTLSKRTISTVNVQLKCSVVILNLQSLVDQRSASIIWPSLKSRKIVLSAPKQIQNEEITAKLIKKNIEVVNMPLNKIVEFSTTIKTLDISIDSNLDNLLKWQRISDSYTVATVVGRLVKESLPQVNNHQKTASRSKLVLKPLHGSSRSHKTGALSIGDVRLAQLKKLLTEKNYIAEFKGEGTLVINEKVAVRKINDAETIIDGTPSELFDTVKKLVTDMLAKI</sequence>
<organism>
    <name type="scientific">Saccharomyces cerevisiae (strain ATCC 204508 / S288c)</name>
    <name type="common">Baker's yeast</name>
    <dbReference type="NCBI Taxonomy" id="559292"/>
    <lineage>
        <taxon>Eukaryota</taxon>
        <taxon>Fungi</taxon>
        <taxon>Dikarya</taxon>
        <taxon>Ascomycota</taxon>
        <taxon>Saccharomycotina</taxon>
        <taxon>Saccharomycetes</taxon>
        <taxon>Saccharomycetales</taxon>
        <taxon>Saccharomycetaceae</taxon>
        <taxon>Saccharomyces</taxon>
    </lineage>
</organism>
<comment type="function">
    <text evidence="2 4">RNA-binding component of the cleavage and polyadenylation factor (CPF) complex, which plays a key role in polyadenylation-dependent pre-mRNA 3'-end formation and cooperates with cleavage factors including the CFIA complex and NAB4/CFIB. May be involved in poly(A)-site recognition. May be involved in the association of the CPF, CPFIA and RNA polymerase II complexes.</text>
</comment>
<comment type="subunit">
    <text evidence="3 4">Component of the cleavage and polyadenylation factor (CPF) complex, which is composed of at least PTI1, SYC1, SSU72, GLC7, MPE1, REF2, PFS2, PTA1, YSH1/BRR5, SWD2, CFT2/YDH1, YTH1, CFT1/YHH1, FIP1 and PAP1. Interacts with the CTD domain of RPB1/RNA polymerase II; the interaction is enhanced upon phosphorylation of the RPB1 CTD domain. Interacts with PCF11.</text>
</comment>
<comment type="interaction">
    <interactant intactId="EBI-31412">
        <id>Q12102</id>
    </interactant>
    <interactant intactId="EBI-14145">
        <id>Q01329</id>
        <label>PTA1</label>
    </interactant>
    <organismsDiffer>false</organismsDiffer>
    <experiments>6</experiments>
</comment>
<comment type="subcellular location">
    <subcellularLocation>
        <location evidence="3 5">Nucleus</location>
    </subcellularLocation>
</comment>
<comment type="miscellaneous">
    <text evidence="6">Present with 3060 molecules/cell in log phase SD medium.</text>
</comment>
<dbReference type="EMBL" id="X89514">
    <property type="protein sequence ID" value="CAA61694.1"/>
    <property type="molecule type" value="Genomic_DNA"/>
</dbReference>
<dbReference type="EMBL" id="Z73287">
    <property type="protein sequence ID" value="CAA97682.1"/>
    <property type="molecule type" value="Genomic_DNA"/>
</dbReference>
<dbReference type="EMBL" id="Z73288">
    <property type="protein sequence ID" value="CAA97684.1"/>
    <property type="molecule type" value="Genomic_DNA"/>
</dbReference>
<dbReference type="EMBL" id="U53878">
    <property type="protein sequence ID" value="AAB67560.1"/>
    <property type="molecule type" value="Genomic_DNA"/>
</dbReference>
<dbReference type="EMBL" id="U53877">
    <property type="protein sequence ID" value="AAB82376.1"/>
    <property type="molecule type" value="Genomic_DNA"/>
</dbReference>
<dbReference type="EMBL" id="BK006945">
    <property type="protein sequence ID" value="DAA09429.1"/>
    <property type="molecule type" value="Genomic_DNA"/>
</dbReference>
<dbReference type="PIR" id="S64952">
    <property type="entry name" value="S64952"/>
</dbReference>
<dbReference type="RefSeq" id="NP_013216.1">
    <property type="nucleotide sequence ID" value="NM_001182002.1"/>
</dbReference>
<dbReference type="PDB" id="2I7X">
    <property type="method" value="X-ray"/>
    <property type="resolution" value="2.50 A"/>
    <property type="chains" value="A=1-717"/>
</dbReference>
<dbReference type="PDB" id="7ZGQ">
    <property type="method" value="EM"/>
    <property type="resolution" value="2.80 A"/>
    <property type="chains" value="C=1-720"/>
</dbReference>
<dbReference type="PDB" id="7ZGR">
    <property type="method" value="EM"/>
    <property type="resolution" value="2.60 A"/>
    <property type="chains" value="C=1-720"/>
</dbReference>
<dbReference type="PDBsum" id="2I7X"/>
<dbReference type="PDBsum" id="7ZGQ"/>
<dbReference type="PDBsum" id="7ZGR"/>
<dbReference type="EMDB" id="EMD-14711"/>
<dbReference type="EMDB" id="EMD-14712"/>
<dbReference type="SMR" id="Q12102"/>
<dbReference type="BioGRID" id="31387">
    <property type="interactions" value="538"/>
</dbReference>
<dbReference type="ComplexPortal" id="CPX-1053">
    <property type="entry name" value="Cleavage and polyadenylation specificity factor complex"/>
</dbReference>
<dbReference type="DIP" id="DIP-2468N"/>
<dbReference type="FunCoup" id="Q12102">
    <property type="interactions" value="962"/>
</dbReference>
<dbReference type="IntAct" id="Q12102">
    <property type="interactions" value="30"/>
</dbReference>
<dbReference type="MINT" id="Q12102"/>
<dbReference type="STRING" id="4932.YLR115W"/>
<dbReference type="iPTMnet" id="Q12102"/>
<dbReference type="PaxDb" id="4932-YLR115W"/>
<dbReference type="PeptideAtlas" id="Q12102"/>
<dbReference type="EnsemblFungi" id="YLR115W_mRNA">
    <property type="protein sequence ID" value="YLR115W"/>
    <property type="gene ID" value="YLR115W"/>
</dbReference>
<dbReference type="GeneID" id="850806"/>
<dbReference type="KEGG" id="sce:YLR115W"/>
<dbReference type="AGR" id="SGD:S000004105"/>
<dbReference type="SGD" id="S000004105">
    <property type="gene designation" value="CFT2"/>
</dbReference>
<dbReference type="VEuPathDB" id="FungiDB:YLR115W"/>
<dbReference type="eggNOG" id="KOG1135">
    <property type="taxonomic scope" value="Eukaryota"/>
</dbReference>
<dbReference type="GeneTree" id="ENSGT00910000144260"/>
<dbReference type="HOGENOM" id="CLU_002227_3_0_1"/>
<dbReference type="InParanoid" id="Q12102"/>
<dbReference type="OMA" id="QSRHNME"/>
<dbReference type="OrthoDB" id="64353at2759"/>
<dbReference type="BioCyc" id="YEAST:G3O-32260-MONOMER"/>
<dbReference type="Reactome" id="R-SCE-77595">
    <property type="pathway name" value="Processing of Intronless Pre-mRNAs"/>
</dbReference>
<dbReference type="BioGRID-ORCS" id="850806">
    <property type="hits" value="0 hits in 10 CRISPR screens"/>
</dbReference>
<dbReference type="EvolutionaryTrace" id="Q12102"/>
<dbReference type="PRO" id="PR:Q12102"/>
<dbReference type="Proteomes" id="UP000002311">
    <property type="component" value="Chromosome XII"/>
</dbReference>
<dbReference type="RNAct" id="Q12102">
    <property type="molecule type" value="protein"/>
</dbReference>
<dbReference type="GO" id="GO:0005847">
    <property type="term" value="C:mRNA cleavage and polyadenylation specificity factor complex"/>
    <property type="evidence" value="ECO:0000314"/>
    <property type="project" value="SGD"/>
</dbReference>
<dbReference type="GO" id="GO:0005634">
    <property type="term" value="C:nucleus"/>
    <property type="evidence" value="ECO:0000303"/>
    <property type="project" value="ComplexPortal"/>
</dbReference>
<dbReference type="GO" id="GO:0003723">
    <property type="term" value="F:RNA binding"/>
    <property type="evidence" value="ECO:0000314"/>
    <property type="project" value="SGD"/>
</dbReference>
<dbReference type="GO" id="GO:0006397">
    <property type="term" value="P:mRNA processing"/>
    <property type="evidence" value="ECO:0000314"/>
    <property type="project" value="SGD"/>
</dbReference>
<dbReference type="GO" id="GO:0030846">
    <property type="term" value="P:termination of RNA polymerase II transcription, poly(A)-coupled"/>
    <property type="evidence" value="ECO:0000303"/>
    <property type="project" value="ComplexPortal"/>
</dbReference>
<dbReference type="CDD" id="cd16293">
    <property type="entry name" value="CPSF2-like_MBL-fold"/>
    <property type="match status" value="1"/>
</dbReference>
<dbReference type="DisProt" id="DP02480"/>
<dbReference type="FunFam" id="3.60.15.10:FF:000072">
    <property type="entry name" value="Cleavage and polyadenylation specificity factor subunit 2"/>
    <property type="match status" value="1"/>
</dbReference>
<dbReference type="Gene3D" id="3.40.50.10890">
    <property type="match status" value="1"/>
</dbReference>
<dbReference type="Gene3D" id="3.60.15.10">
    <property type="entry name" value="Ribonuclease Z/Hydroxyacylglutathione hydrolase-like"/>
    <property type="match status" value="2"/>
</dbReference>
<dbReference type="InterPro" id="IPR022712">
    <property type="entry name" value="Beta_Casp"/>
</dbReference>
<dbReference type="InterPro" id="IPR027075">
    <property type="entry name" value="CPSF2"/>
</dbReference>
<dbReference type="InterPro" id="IPR025069">
    <property type="entry name" value="Cpsf2_C"/>
</dbReference>
<dbReference type="InterPro" id="IPR035639">
    <property type="entry name" value="CPSF2_MBL"/>
</dbReference>
<dbReference type="InterPro" id="IPR001279">
    <property type="entry name" value="Metallo-B-lactamas"/>
</dbReference>
<dbReference type="InterPro" id="IPR036866">
    <property type="entry name" value="RibonucZ/Hydroxyglut_hydro"/>
</dbReference>
<dbReference type="PANTHER" id="PTHR45922">
    <property type="entry name" value="CLEAVAGE AND POLYADENYLATION SPECIFICITY FACTOR SUBUNIT 2"/>
    <property type="match status" value="1"/>
</dbReference>
<dbReference type="PANTHER" id="PTHR45922:SF1">
    <property type="entry name" value="CLEAVAGE AND POLYADENYLATION SPECIFICITY FACTOR SUBUNIT 2"/>
    <property type="match status" value="1"/>
</dbReference>
<dbReference type="Pfam" id="PF13299">
    <property type="entry name" value="CPSF100_C"/>
    <property type="match status" value="1"/>
</dbReference>
<dbReference type="Pfam" id="PF16661">
    <property type="entry name" value="Lactamase_B_6"/>
    <property type="match status" value="1"/>
</dbReference>
<dbReference type="SMART" id="SM01027">
    <property type="entry name" value="Beta-Casp"/>
    <property type="match status" value="1"/>
</dbReference>
<dbReference type="SUPFAM" id="SSF56281">
    <property type="entry name" value="Metallo-hydrolase/oxidoreductase"/>
    <property type="match status" value="2"/>
</dbReference>
<protein>
    <recommendedName>
        <fullName>Cleavage factor two protein 2</fullName>
    </recommendedName>
    <alternativeName>
        <fullName>105 kDa protein associated with polyadenylation factor I</fullName>
    </alternativeName>
</protein>
<keyword id="KW-0002">3D-structure</keyword>
<keyword id="KW-0507">mRNA processing</keyword>
<keyword id="KW-0539">Nucleus</keyword>
<keyword id="KW-1185">Reference proteome</keyword>
<evidence type="ECO:0000256" key="1">
    <source>
        <dbReference type="SAM" id="MobiDB-lite"/>
    </source>
</evidence>
<evidence type="ECO:0000269" key="2">
    <source>
    </source>
</evidence>
<evidence type="ECO:0000269" key="3">
    <source>
    </source>
</evidence>
<evidence type="ECO:0000269" key="4">
    <source>
    </source>
</evidence>
<evidence type="ECO:0000269" key="5">
    <source>
    </source>
</evidence>
<evidence type="ECO:0000269" key="6">
    <source>
    </source>
</evidence>
<evidence type="ECO:0007829" key="7">
    <source>
        <dbReference type="PDB" id="2I7X"/>
    </source>
</evidence>
<evidence type="ECO:0007829" key="8">
    <source>
        <dbReference type="PDB" id="7ZGR"/>
    </source>
</evidence>
<proteinExistence type="evidence at protein level"/>
<name>CFT2_YEAST</name>
<accession>Q12102</accession>
<accession>D6VYB3</accession>
<accession>Q7LGW6</accession>
<feature type="chain" id="PRO_0000076204" description="Cleavage factor two protein 2">
    <location>
        <begin position="1"/>
        <end position="859"/>
    </location>
</feature>
<feature type="region of interest" description="Disordered" evidence="1">
    <location>
        <begin position="560"/>
        <end position="611"/>
    </location>
</feature>
<feature type="compositionally biased region" description="Acidic residues" evidence="1">
    <location>
        <begin position="586"/>
        <end position="597"/>
    </location>
</feature>
<feature type="strand" evidence="7">
    <location>
        <begin position="3"/>
        <end position="7"/>
    </location>
</feature>
<feature type="strand" evidence="7">
    <location>
        <begin position="10"/>
        <end position="14"/>
    </location>
</feature>
<feature type="strand" evidence="7">
    <location>
        <begin position="18"/>
        <end position="22"/>
    </location>
</feature>
<feature type="strand" evidence="7">
    <location>
        <begin position="25"/>
        <end position="29"/>
    </location>
</feature>
<feature type="turn" evidence="7">
    <location>
        <begin position="35"/>
        <end position="37"/>
    </location>
</feature>
<feature type="helix" evidence="7">
    <location>
        <begin position="40"/>
        <end position="48"/>
    </location>
</feature>
<feature type="helix" evidence="7">
    <location>
        <begin position="51"/>
        <end position="53"/>
    </location>
</feature>
<feature type="strand" evidence="7">
    <location>
        <begin position="56"/>
        <end position="58"/>
    </location>
</feature>
<feature type="helix" evidence="7">
    <location>
        <begin position="64"/>
        <end position="67"/>
    </location>
</feature>
<feature type="helix" evidence="7">
    <location>
        <begin position="70"/>
        <end position="76"/>
    </location>
</feature>
<feature type="helix" evidence="7">
    <location>
        <begin position="78"/>
        <end position="83"/>
    </location>
</feature>
<feature type="strand" evidence="7">
    <location>
        <begin position="86"/>
        <end position="90"/>
    </location>
</feature>
<feature type="helix" evidence="7">
    <location>
        <begin position="91"/>
        <end position="107"/>
    </location>
</feature>
<feature type="strand" evidence="7">
    <location>
        <begin position="110"/>
        <end position="114"/>
    </location>
</feature>
<feature type="helix" evidence="7">
    <location>
        <begin position="121"/>
        <end position="129"/>
    </location>
</feature>
<feature type="strand" evidence="7">
    <location>
        <begin position="131"/>
        <end position="134"/>
    </location>
</feature>
<feature type="strand" evidence="7">
    <location>
        <begin position="140"/>
        <end position="142"/>
    </location>
</feature>
<feature type="turn" evidence="7">
    <location>
        <begin position="143"/>
        <end position="148"/>
    </location>
</feature>
<feature type="strand" evidence="7">
    <location>
        <begin position="149"/>
        <end position="155"/>
    </location>
</feature>
<feature type="strand" evidence="7">
    <location>
        <begin position="157"/>
        <end position="159"/>
    </location>
</feature>
<feature type="strand" evidence="7">
    <location>
        <begin position="163"/>
        <end position="168"/>
    </location>
</feature>
<feature type="strand" evidence="7">
    <location>
        <begin position="173"/>
        <end position="179"/>
    </location>
</feature>
<feature type="strand" evidence="7">
    <location>
        <begin position="208"/>
        <end position="212"/>
    </location>
</feature>
<feature type="helix" evidence="7">
    <location>
        <begin position="223"/>
        <end position="237"/>
    </location>
</feature>
<feature type="strand" evidence="7">
    <location>
        <begin position="243"/>
        <end position="248"/>
    </location>
</feature>
<feature type="turn" evidence="7">
    <location>
        <begin position="250"/>
        <end position="252"/>
    </location>
</feature>
<feature type="helix" evidence="7">
    <location>
        <begin position="253"/>
        <end position="265"/>
    </location>
</feature>
<feature type="strand" evidence="7">
    <location>
        <begin position="279"/>
        <end position="282"/>
    </location>
</feature>
<feature type="turn" evidence="7">
    <location>
        <begin position="284"/>
        <end position="287"/>
    </location>
</feature>
<feature type="helix" evidence="7">
    <location>
        <begin position="288"/>
        <end position="294"/>
    </location>
</feature>
<feature type="helix" evidence="7">
    <location>
        <begin position="297"/>
        <end position="299"/>
    </location>
</feature>
<feature type="helix" evidence="7">
    <location>
        <begin position="302"/>
        <end position="309"/>
    </location>
</feature>
<feature type="strand" evidence="7">
    <location>
        <begin position="310"/>
        <end position="313"/>
    </location>
</feature>
<feature type="turn" evidence="7">
    <location>
        <begin position="320"/>
        <end position="322"/>
    </location>
</feature>
<feature type="strand" evidence="7">
    <location>
        <begin position="323"/>
        <end position="325"/>
    </location>
</feature>
<feature type="helix" evidence="7">
    <location>
        <begin position="328"/>
        <end position="333"/>
    </location>
</feature>
<feature type="strand" evidence="7">
    <location>
        <begin position="338"/>
        <end position="344"/>
    </location>
</feature>
<feature type="helix" evidence="7">
    <location>
        <begin position="346"/>
        <end position="356"/>
    </location>
</feature>
<feature type="strand" evidence="7">
    <location>
        <begin position="362"/>
        <end position="366"/>
    </location>
</feature>
<feature type="helix" evidence="7">
    <location>
        <begin position="375"/>
        <end position="385"/>
    </location>
</feature>
<feature type="strand" evidence="7">
    <location>
        <begin position="405"/>
        <end position="417"/>
    </location>
</feature>
<feature type="helix" evidence="8">
    <location>
        <begin position="555"/>
        <end position="557"/>
    </location>
</feature>
<feature type="helix" evidence="7">
    <location>
        <begin position="631"/>
        <end position="633"/>
    </location>
</feature>
<feature type="strand" evidence="7">
    <location>
        <begin position="640"/>
        <end position="651"/>
    </location>
</feature>
<feature type="strand" evidence="7">
    <location>
        <begin position="653"/>
        <end position="657"/>
    </location>
</feature>
<feature type="helix" evidence="7">
    <location>
        <begin position="666"/>
        <end position="672"/>
    </location>
</feature>
<feature type="helix" evidence="7">
    <location>
        <begin position="673"/>
        <end position="675"/>
    </location>
</feature>
<feature type="strand" evidence="7">
    <location>
        <begin position="679"/>
        <end position="683"/>
    </location>
</feature>
<feature type="helix" evidence="7">
    <location>
        <begin position="687"/>
        <end position="689"/>
    </location>
</feature>
<feature type="helix" evidence="7">
    <location>
        <begin position="692"/>
        <end position="700"/>
    </location>
</feature>
<feature type="strand" evidence="7">
    <location>
        <begin position="704"/>
        <end position="707"/>
    </location>
</feature>
<feature type="strand" evidence="7">
    <location>
        <begin position="714"/>
        <end position="716"/>
    </location>
</feature>